<keyword id="KW-1003">Cell membrane</keyword>
<keyword id="KW-0165">Cleavage on pair of basic residues</keyword>
<keyword id="KW-0325">Glycoprotein</keyword>
<keyword id="KW-0472">Membrane</keyword>
<keyword id="KW-1185">Reference proteome</keyword>
<keyword id="KW-0732">Signal</keyword>
<keyword id="KW-0812">Transmembrane</keyword>
<keyword id="KW-1133">Transmembrane helix</keyword>
<sequence>MASPLPVRTLPLILILLAVLAPGASDFNISSLSGPLSPALTESLLVALPPCHLTGGNATLMVRRANDSKVVKSSFMVPPCRGRRELVSVVDSGSGFTVTRLSAYQVTNLVPGTKYYISYLVTKGASTESSREIPMSTLPRKNMEGIGLGMARTGGMVVITVLLSVAMFLLVVGFITALALGARK</sequence>
<comment type="function">
    <text evidence="1">Component of the asymmetric unit membrane (AUM); a highly specialized biomembrane elaborated by terminally differentiated urothelial cells. May play an important role in regulating the assembly of the AUM (By similarity).</text>
</comment>
<comment type="subunit">
    <text evidence="1">Interacts with uroplakin-1a (UPK1A).</text>
</comment>
<comment type="subcellular location">
    <subcellularLocation>
        <location evidence="4">Cell membrane</location>
        <topology evidence="4">Single-pass type I membrane protein</topology>
    </subcellularLocation>
    <text evidence="1">Heterodimer formation with UPK1A is a prerequisite to exit out of the endoplasmic reticulum (ER).</text>
</comment>
<comment type="tissue specificity">
    <text evidence="3">Expressed only in the urothelium. Localizes to urothelial superficial cells.</text>
</comment>
<comment type="similarity">
    <text evidence="4">Belongs to the uroplakin-2 family.</text>
</comment>
<proteinExistence type="evidence at transcript level"/>
<organism>
    <name type="scientific">Sus scrofa</name>
    <name type="common">Pig</name>
    <dbReference type="NCBI Taxonomy" id="9823"/>
    <lineage>
        <taxon>Eukaryota</taxon>
        <taxon>Metazoa</taxon>
        <taxon>Chordata</taxon>
        <taxon>Craniata</taxon>
        <taxon>Vertebrata</taxon>
        <taxon>Euteleostomi</taxon>
        <taxon>Mammalia</taxon>
        <taxon>Eutheria</taxon>
        <taxon>Laurasiatheria</taxon>
        <taxon>Artiodactyla</taxon>
        <taxon>Suina</taxon>
        <taxon>Suidae</taxon>
        <taxon>Sus</taxon>
    </lineage>
</organism>
<evidence type="ECO:0000250" key="1"/>
<evidence type="ECO:0000255" key="2"/>
<evidence type="ECO:0000269" key="3">
    <source>
    </source>
</evidence>
<evidence type="ECO:0000305" key="4"/>
<name>UPK2_PIG</name>
<protein>
    <recommendedName>
        <fullName>Uroplakin-2</fullName>
        <shortName>UP2</shortName>
    </recommendedName>
    <alternativeName>
        <fullName>Uroplakin II</fullName>
        <shortName>UPII</shortName>
    </alternativeName>
</protein>
<feature type="signal peptide" evidence="2">
    <location>
        <begin position="1"/>
        <end position="25"/>
    </location>
</feature>
<feature type="propeptide" id="PRO_0000022634" evidence="2">
    <location>
        <begin position="26"/>
        <end position="84"/>
    </location>
</feature>
<feature type="chain" id="PRO_0000022635" description="Uroplakin-2">
    <location>
        <begin position="85"/>
        <end position="184"/>
    </location>
</feature>
<feature type="topological domain" description="Lumenal" evidence="2">
    <location>
        <begin position="85"/>
        <end position="155"/>
    </location>
</feature>
<feature type="transmembrane region" description="Helical" evidence="2">
    <location>
        <begin position="156"/>
        <end position="180"/>
    </location>
</feature>
<feature type="topological domain" description="Cytoplasmic" evidence="2">
    <location>
        <begin position="181"/>
        <end position="184"/>
    </location>
</feature>
<feature type="glycosylation site" description="N-linked (GlcNAc...) asparagine" evidence="2">
    <location>
        <position position="28"/>
    </location>
</feature>
<feature type="glycosylation site" description="N-linked (GlcNAc...) asparagine" evidence="2">
    <location>
        <position position="57"/>
    </location>
</feature>
<feature type="glycosylation site" description="N-linked (GlcNAc...) asparagine" evidence="2">
    <location>
        <position position="66"/>
    </location>
</feature>
<feature type="sequence conflict" description="In Ref. 1; AAD49848." evidence="4" ref="1">
    <original>KNMEG</original>
    <variation>RKAEA</variation>
    <location>
        <begin position="141"/>
        <end position="145"/>
    </location>
</feature>
<feature type="sequence conflict" description="In Ref. 1; AAD49848." evidence="4" ref="1">
    <original>R</original>
    <variation>P</variation>
    <location>
        <position position="152"/>
    </location>
</feature>
<feature type="sequence conflict" description="In Ref. 1; AAD49848." evidence="4" ref="1">
    <original>T</original>
    <variation>Q</variation>
    <location>
        <position position="160"/>
    </location>
</feature>
<accession>Q95L04</accession>
<accession>Q7M2K0</accession>
<accession>Q9TUP8</accession>
<reference key="1">
    <citation type="journal article" date="2002" name="Biochem. Biophys. Res. Commun.">
        <title>Cloning, sequencing, and expression analysis of the porcine uroplakin II gene.</title>
        <authorList>
            <person name="Kwon D.-N."/>
            <person name="Seo H.G."/>
            <person name="Kim J.-H."/>
        </authorList>
    </citation>
    <scope>NUCLEOTIDE SEQUENCE [GENOMIC DNA / MRNA]</scope>
    <scope>TISSUE SPECIFICITY</scope>
</reference>
<dbReference type="EMBL" id="AY044189">
    <property type="protein sequence ID" value="AAK96021.1"/>
    <property type="molecule type" value="Genomic_DNA"/>
</dbReference>
<dbReference type="EMBL" id="AF164141">
    <property type="protein sequence ID" value="AAD49848.2"/>
    <property type="molecule type" value="mRNA"/>
</dbReference>
<dbReference type="PIR" id="JC7839">
    <property type="entry name" value="JC7839"/>
</dbReference>
<dbReference type="RefSeq" id="NP_999177.1">
    <property type="nucleotide sequence ID" value="NM_214012.1"/>
</dbReference>
<dbReference type="SMR" id="Q95L04"/>
<dbReference type="FunCoup" id="Q95L04">
    <property type="interactions" value="64"/>
</dbReference>
<dbReference type="STRING" id="9823.ENSSSCP00000016023"/>
<dbReference type="GlyCosmos" id="Q95L04">
    <property type="glycosylation" value="3 sites, No reported glycans"/>
</dbReference>
<dbReference type="GlyGen" id="Q95L04">
    <property type="glycosylation" value="3 sites"/>
</dbReference>
<dbReference type="PaxDb" id="9823-ENSSSCP00000016023"/>
<dbReference type="PeptideAtlas" id="Q95L04"/>
<dbReference type="GeneID" id="397075"/>
<dbReference type="KEGG" id="ssc:397075"/>
<dbReference type="CTD" id="7379"/>
<dbReference type="eggNOG" id="KOG2294">
    <property type="taxonomic scope" value="Eukaryota"/>
</dbReference>
<dbReference type="InParanoid" id="Q95L04"/>
<dbReference type="OrthoDB" id="9947134at2759"/>
<dbReference type="Proteomes" id="UP000008227">
    <property type="component" value="Unplaced"/>
</dbReference>
<dbReference type="Proteomes" id="UP000314985">
    <property type="component" value="Unplaced"/>
</dbReference>
<dbReference type="Proteomes" id="UP000694570">
    <property type="component" value="Unplaced"/>
</dbReference>
<dbReference type="Proteomes" id="UP000694571">
    <property type="component" value="Unplaced"/>
</dbReference>
<dbReference type="Proteomes" id="UP000694720">
    <property type="component" value="Unplaced"/>
</dbReference>
<dbReference type="Proteomes" id="UP000694722">
    <property type="component" value="Unplaced"/>
</dbReference>
<dbReference type="Proteomes" id="UP000694723">
    <property type="component" value="Unplaced"/>
</dbReference>
<dbReference type="Proteomes" id="UP000694724">
    <property type="component" value="Unplaced"/>
</dbReference>
<dbReference type="Proteomes" id="UP000694725">
    <property type="component" value="Unplaced"/>
</dbReference>
<dbReference type="Proteomes" id="UP000694726">
    <property type="component" value="Unplaced"/>
</dbReference>
<dbReference type="Proteomes" id="UP000694727">
    <property type="component" value="Unplaced"/>
</dbReference>
<dbReference type="Proteomes" id="UP000694728">
    <property type="component" value="Unplaced"/>
</dbReference>
<dbReference type="GO" id="GO:0016324">
    <property type="term" value="C:apical plasma membrane"/>
    <property type="evidence" value="ECO:0000318"/>
    <property type="project" value="GO_Central"/>
</dbReference>
<dbReference type="GO" id="GO:0030855">
    <property type="term" value="P:epithelial cell differentiation"/>
    <property type="evidence" value="ECO:0000318"/>
    <property type="project" value="GO_Central"/>
</dbReference>
<dbReference type="CDD" id="cd09967">
    <property type="entry name" value="UP_II"/>
    <property type="match status" value="1"/>
</dbReference>
<dbReference type="InterPro" id="IPR009952">
    <property type="entry name" value="Uroplakin-2"/>
</dbReference>
<dbReference type="PANTHER" id="PTHR17573">
    <property type="entry name" value="UROPLAKIN II"/>
    <property type="match status" value="1"/>
</dbReference>
<dbReference type="PANTHER" id="PTHR17573:SF0">
    <property type="entry name" value="UROPLAKIN-2"/>
    <property type="match status" value="1"/>
</dbReference>
<dbReference type="Pfam" id="PF07353">
    <property type="entry name" value="Uroplakin_II"/>
    <property type="match status" value="1"/>
</dbReference>
<dbReference type="PIRSF" id="PIRSF016439">
    <property type="entry name" value="Uroplakin_II"/>
    <property type="match status" value="1"/>
</dbReference>
<gene>
    <name type="primary">UPK2</name>
</gene>